<feature type="chain" id="PRO_1000074810" description="UPF0102 protein COXBURSA331_A1934">
    <location>
        <begin position="1"/>
        <end position="120"/>
    </location>
</feature>
<dbReference type="EMBL" id="CP000890">
    <property type="protein sequence ID" value="ABX77541.1"/>
    <property type="molecule type" value="Genomic_DNA"/>
</dbReference>
<dbReference type="RefSeq" id="WP_011996497.1">
    <property type="nucleotide sequence ID" value="NC_010117.1"/>
</dbReference>
<dbReference type="SMR" id="A9NAA4"/>
<dbReference type="KEGG" id="cbs:COXBURSA331_A1934"/>
<dbReference type="HOGENOM" id="CLU_115353_1_0_6"/>
<dbReference type="GO" id="GO:0003676">
    <property type="term" value="F:nucleic acid binding"/>
    <property type="evidence" value="ECO:0007669"/>
    <property type="project" value="InterPro"/>
</dbReference>
<dbReference type="Gene3D" id="3.40.1350.10">
    <property type="match status" value="1"/>
</dbReference>
<dbReference type="HAMAP" id="MF_00048">
    <property type="entry name" value="UPF0102"/>
    <property type="match status" value="1"/>
</dbReference>
<dbReference type="InterPro" id="IPR011335">
    <property type="entry name" value="Restrct_endonuc-II-like"/>
</dbReference>
<dbReference type="InterPro" id="IPR011856">
    <property type="entry name" value="tRNA_endonuc-like_dom_sf"/>
</dbReference>
<dbReference type="InterPro" id="IPR003509">
    <property type="entry name" value="UPF0102_YraN-like"/>
</dbReference>
<dbReference type="NCBIfam" id="NF009150">
    <property type="entry name" value="PRK12497.1-3"/>
    <property type="match status" value="1"/>
</dbReference>
<dbReference type="NCBIfam" id="NF011277">
    <property type="entry name" value="PRK14684.1"/>
    <property type="match status" value="1"/>
</dbReference>
<dbReference type="NCBIfam" id="TIGR00252">
    <property type="entry name" value="YraN family protein"/>
    <property type="match status" value="1"/>
</dbReference>
<dbReference type="PANTHER" id="PTHR34039">
    <property type="entry name" value="UPF0102 PROTEIN YRAN"/>
    <property type="match status" value="1"/>
</dbReference>
<dbReference type="PANTHER" id="PTHR34039:SF1">
    <property type="entry name" value="UPF0102 PROTEIN YRAN"/>
    <property type="match status" value="1"/>
</dbReference>
<dbReference type="Pfam" id="PF02021">
    <property type="entry name" value="UPF0102"/>
    <property type="match status" value="1"/>
</dbReference>
<dbReference type="SUPFAM" id="SSF52980">
    <property type="entry name" value="Restriction endonuclease-like"/>
    <property type="match status" value="1"/>
</dbReference>
<proteinExistence type="inferred from homology"/>
<accession>A9NAA4</accession>
<sequence length="120" mass="14247">MFSLTQKIGFNAEKTACRYLQKQGLSFITKNFRYKQGEIDLIMSDQSMLVFIEVRYRRFSDFIHPVATVTPLKQRRLIKTALHYLQKHRLLDKISCRFDIVGITADRQITWIKNAIEVEY</sequence>
<name>Y1934_COXBR</name>
<comment type="similarity">
    <text evidence="1">Belongs to the UPF0102 family.</text>
</comment>
<reference key="1">
    <citation type="submission" date="2007-11" db="EMBL/GenBank/DDBJ databases">
        <title>Genome sequencing of phylogenetically and phenotypically diverse Coxiella burnetii isolates.</title>
        <authorList>
            <person name="Seshadri R."/>
            <person name="Samuel J.E."/>
        </authorList>
    </citation>
    <scope>NUCLEOTIDE SEQUENCE [LARGE SCALE GENOMIC DNA]</scope>
    <source>
        <strain>RSA 331 / Henzerling II</strain>
    </source>
</reference>
<gene>
    <name type="ordered locus">COXBURSA331_A1934</name>
</gene>
<evidence type="ECO:0000255" key="1">
    <source>
        <dbReference type="HAMAP-Rule" id="MF_00048"/>
    </source>
</evidence>
<protein>
    <recommendedName>
        <fullName evidence="1">UPF0102 protein COXBURSA331_A1934</fullName>
    </recommendedName>
</protein>
<organism>
    <name type="scientific">Coxiella burnetii (strain RSA 331 / Henzerling II)</name>
    <dbReference type="NCBI Taxonomy" id="360115"/>
    <lineage>
        <taxon>Bacteria</taxon>
        <taxon>Pseudomonadati</taxon>
        <taxon>Pseudomonadota</taxon>
        <taxon>Gammaproteobacteria</taxon>
        <taxon>Legionellales</taxon>
        <taxon>Coxiellaceae</taxon>
        <taxon>Coxiella</taxon>
    </lineage>
</organism>